<proteinExistence type="evidence at transcript level"/>
<evidence type="ECO:0000250" key="1"/>
<evidence type="ECO:0000255" key="2"/>
<evidence type="ECO:0000305" key="3"/>
<name>PSC13_MAIZE</name>
<organism>
    <name type="scientific">Zea mays</name>
    <name type="common">Maize</name>
    <dbReference type="NCBI Taxonomy" id="4577"/>
    <lineage>
        <taxon>Eukaryota</taxon>
        <taxon>Viridiplantae</taxon>
        <taxon>Streptophyta</taxon>
        <taxon>Embryophyta</taxon>
        <taxon>Tracheophyta</taxon>
        <taxon>Spermatophyta</taxon>
        <taxon>Magnoliopsida</taxon>
        <taxon>Liliopsida</taxon>
        <taxon>Poales</taxon>
        <taxon>Poaceae</taxon>
        <taxon>PACMAD clade</taxon>
        <taxon>Panicoideae</taxon>
        <taxon>Andropogonodae</taxon>
        <taxon>Andropogoneae</taxon>
        <taxon>Tripsacinae</taxon>
        <taxon>Zea</taxon>
    </lineage>
</organism>
<protein>
    <recommendedName>
        <fullName>Pollen-specific protein C13</fullName>
    </recommendedName>
</protein>
<gene>
    <name type="primary">MGS1</name>
</gene>
<reference key="1">
    <citation type="journal article" date="1989" name="Plant Cell">
        <title>Characterization of a pollen-specific cDNA clone from Zea mays and its expression.</title>
        <authorList>
            <person name="Hanson D.D."/>
            <person name="Hamilton D.A."/>
            <person name="Travis J.L."/>
            <person name="Bashe D.M."/>
            <person name="Mascarenhas J.P."/>
        </authorList>
    </citation>
    <scope>NUCLEOTIDE SEQUENCE [MRNA]</scope>
</reference>
<feature type="signal peptide" evidence="2">
    <location>
        <begin position="1"/>
        <end position="27"/>
    </location>
</feature>
<feature type="chain" id="PRO_0000020073" description="Pollen-specific protein C13">
    <location>
        <begin position="28"/>
        <end position="170"/>
    </location>
</feature>
<feature type="glycosylation site" description="N-linked (GlcNAc...) asparagine" evidence="2">
    <location>
        <position position="53"/>
    </location>
</feature>
<feature type="disulfide bond" evidence="1">
    <location>
        <begin position="43"/>
        <end position="114"/>
    </location>
</feature>
<feature type="disulfide bond" evidence="1">
    <location>
        <begin position="46"/>
        <end position="155"/>
    </location>
</feature>
<feature type="disulfide bond" evidence="1">
    <location>
        <begin position="67"/>
        <end position="102"/>
    </location>
</feature>
<sequence length="170" mass="18218">MASVPAPATTTAAVILCLCVVLSCAAADDPNLPDYVIQGRVYCDTCRAGFVTNVTEYIAGAKVRLECKHFGTGKLERAIDGVTDATGTYTIELKDSHEEDICQVVLVASPRKDCDEVQALRDRAGVLLTRNVGISDSLRPANPLGYFKDVPLPVCAALLKQLDSDDDDDQ</sequence>
<accession>P33050</accession>
<dbReference type="EMBL" id="S44171">
    <property type="protein sequence ID" value="AAB23277.1"/>
    <property type="molecule type" value="mRNA"/>
</dbReference>
<dbReference type="PIR" id="JQ1107">
    <property type="entry name" value="JQ1107"/>
</dbReference>
<dbReference type="RefSeq" id="NP_001105351.1">
    <property type="nucleotide sequence ID" value="NM_001111881.1"/>
</dbReference>
<dbReference type="SMR" id="P33050"/>
<dbReference type="FunCoup" id="P33050">
    <property type="interactions" value="3"/>
</dbReference>
<dbReference type="STRING" id="4577.P33050"/>
<dbReference type="Allergome" id="1004">
    <property type="allergen name" value="Zea m Zm13"/>
</dbReference>
<dbReference type="GlyCosmos" id="P33050">
    <property type="glycosylation" value="1 site, No reported glycans"/>
</dbReference>
<dbReference type="PaxDb" id="4577-GRMZM2G317406_P01"/>
<dbReference type="GeneID" id="542292"/>
<dbReference type="KEGG" id="zma:542292"/>
<dbReference type="MaizeGDB" id="25723"/>
<dbReference type="eggNOG" id="ENOG502S1QR">
    <property type="taxonomic scope" value="Eukaryota"/>
</dbReference>
<dbReference type="HOGENOM" id="CLU_094008_2_1_1"/>
<dbReference type="InParanoid" id="P33050"/>
<dbReference type="OMA" id="ITHTHES"/>
<dbReference type="OrthoDB" id="1896520at2759"/>
<dbReference type="Proteomes" id="UP000007305">
    <property type="component" value="Unplaced"/>
</dbReference>
<dbReference type="ExpressionAtlas" id="P33050">
    <property type="expression patterns" value="baseline and differential"/>
</dbReference>
<dbReference type="GO" id="GO:0005615">
    <property type="term" value="C:extracellular space"/>
    <property type="evidence" value="ECO:0007669"/>
    <property type="project" value="InterPro"/>
</dbReference>
<dbReference type="InterPro" id="IPR006040">
    <property type="entry name" value="Allergen_Ole_e_I_CS"/>
</dbReference>
<dbReference type="InterPro" id="IPR006041">
    <property type="entry name" value="Pollen_Ole_e1_allergen"/>
</dbReference>
<dbReference type="PANTHER" id="PTHR31614:SF34">
    <property type="entry name" value="POLLEN-SPECIFIC PROTEIN C13"/>
    <property type="match status" value="1"/>
</dbReference>
<dbReference type="PANTHER" id="PTHR31614">
    <property type="entry name" value="PROTEIN DOWNSTREAM OF FLC-RELATED"/>
    <property type="match status" value="1"/>
</dbReference>
<dbReference type="Pfam" id="PF01190">
    <property type="entry name" value="Pollen_Ole_e_1"/>
    <property type="match status" value="1"/>
</dbReference>
<dbReference type="PROSITE" id="PS00925">
    <property type="entry name" value="OLEEI"/>
    <property type="match status" value="1"/>
</dbReference>
<keyword id="KW-1015">Disulfide bond</keyword>
<keyword id="KW-0325">Glycoprotein</keyword>
<keyword id="KW-1185">Reference proteome</keyword>
<keyword id="KW-0732">Signal</keyword>
<comment type="tissue specificity">
    <text>Pollen.</text>
</comment>
<comment type="similarity">
    <text evidence="3">Belongs to the Ole e I family.</text>
</comment>